<feature type="chain" id="PRO_0000381794" description="Tubulin monoglycylase TTLL3">
    <location>
        <begin position="1"/>
        <end position="771"/>
    </location>
</feature>
<feature type="domain" description="TTL" evidence="4">
    <location>
        <begin position="220"/>
        <end position="566"/>
    </location>
</feature>
<feature type="region of interest" description="Disordered" evidence="5">
    <location>
        <begin position="70"/>
        <end position="106"/>
    </location>
</feature>
<feature type="region of interest" description="Disordered" evidence="5">
    <location>
        <begin position="605"/>
        <end position="640"/>
    </location>
</feature>
<feature type="region of interest" description="Disordered" evidence="5">
    <location>
        <begin position="682"/>
        <end position="713"/>
    </location>
</feature>
<feature type="compositionally biased region" description="Acidic residues" evidence="5">
    <location>
        <begin position="86"/>
        <end position="106"/>
    </location>
</feature>
<feature type="compositionally biased region" description="Polar residues" evidence="5">
    <location>
        <begin position="614"/>
        <end position="633"/>
    </location>
</feature>
<feature type="binding site" evidence="2">
    <location>
        <position position="339"/>
    </location>
    <ligand>
        <name>ATP</name>
        <dbReference type="ChEBI" id="CHEBI:30616"/>
    </ligand>
</feature>
<feature type="binding site" evidence="2">
    <location>
        <begin position="345"/>
        <end position="346"/>
    </location>
    <ligand>
        <name>ATP</name>
        <dbReference type="ChEBI" id="CHEBI:30616"/>
    </ligand>
</feature>
<feature type="binding site" evidence="2">
    <location>
        <position position="345"/>
    </location>
    <ligand>
        <name>a protein</name>
        <dbReference type="ChEBI" id="CHEBI:16541"/>
    </ligand>
    <ligandPart>
        <name>L-glutamate residue</name>
        <dbReference type="ChEBI" id="CHEBI:29973"/>
        <note>L-glutamate acceptor residue in protein target</note>
    </ligandPart>
</feature>
<feature type="binding site" evidence="3">
    <location>
        <begin position="377"/>
        <end position="380"/>
    </location>
    <ligand>
        <name>ATP</name>
        <dbReference type="ChEBI" id="CHEBI:30616"/>
    </ligand>
</feature>
<feature type="binding site" evidence="2">
    <location>
        <begin position="390"/>
        <end position="392"/>
    </location>
    <ligand>
        <name>ATP</name>
        <dbReference type="ChEBI" id="CHEBI:30616"/>
    </ligand>
</feature>
<feature type="binding site" evidence="2">
    <location>
        <begin position="434"/>
        <end position="435"/>
    </location>
    <ligand>
        <name>ATP</name>
        <dbReference type="ChEBI" id="CHEBI:30616"/>
    </ligand>
</feature>
<feature type="binding site" evidence="2">
    <location>
        <position position="437"/>
    </location>
    <ligand>
        <name>L-glutamate</name>
        <dbReference type="ChEBI" id="CHEBI:29985"/>
    </ligand>
</feature>
<feature type="binding site" evidence="2">
    <location>
        <position position="512"/>
    </location>
    <ligand>
        <name>Mg(2+)</name>
        <dbReference type="ChEBI" id="CHEBI:18420"/>
        <label>1</label>
    </ligand>
</feature>
<feature type="binding site" evidence="3">
    <location>
        <position position="525"/>
    </location>
    <ligand>
        <name>ATP</name>
        <dbReference type="ChEBI" id="CHEBI:30616"/>
    </ligand>
</feature>
<feature type="binding site" evidence="2">
    <location>
        <position position="525"/>
    </location>
    <ligand>
        <name>Mg(2+)</name>
        <dbReference type="ChEBI" id="CHEBI:18420"/>
        <label>1</label>
    </ligand>
</feature>
<feature type="binding site" evidence="2">
    <location>
        <position position="525"/>
    </location>
    <ligand>
        <name>Mg(2+)</name>
        <dbReference type="ChEBI" id="CHEBI:18420"/>
        <label>2</label>
    </ligand>
</feature>
<feature type="binding site" evidence="2">
    <location>
        <position position="527"/>
    </location>
    <ligand>
        <name>Mg(2+)</name>
        <dbReference type="ChEBI" id="CHEBI:18420"/>
        <label>2</label>
    </ligand>
</feature>
<feature type="site" description="Essential for specifying initiation versus elongation step of the polyglycylase activity" evidence="2">
    <location>
        <position position="345"/>
    </location>
</feature>
<evidence type="ECO:0000250" key="1">
    <source>
        <dbReference type="UniProtKB" id="A4Q9E5"/>
    </source>
</evidence>
<evidence type="ECO:0000250" key="2">
    <source>
        <dbReference type="UniProtKB" id="A4Q9E8"/>
    </source>
</evidence>
<evidence type="ECO:0000250" key="3">
    <source>
        <dbReference type="UniProtKB" id="B2GUB3"/>
    </source>
</evidence>
<evidence type="ECO:0000255" key="4">
    <source>
        <dbReference type="PROSITE-ProRule" id="PRU00568"/>
    </source>
</evidence>
<evidence type="ECO:0000256" key="5">
    <source>
        <dbReference type="SAM" id="MobiDB-lite"/>
    </source>
</evidence>
<evidence type="ECO:0000269" key="6">
    <source>
    </source>
</evidence>
<keyword id="KW-0067">ATP-binding</keyword>
<keyword id="KW-0966">Cell projection</keyword>
<keyword id="KW-0969">Cilium</keyword>
<keyword id="KW-0963">Cytoplasm</keyword>
<keyword id="KW-0206">Cytoskeleton</keyword>
<keyword id="KW-0282">Flagellum</keyword>
<keyword id="KW-0436">Ligase</keyword>
<keyword id="KW-0460">Magnesium</keyword>
<keyword id="KW-0479">Metal-binding</keyword>
<keyword id="KW-0493">Microtubule</keyword>
<keyword id="KW-0547">Nucleotide-binding</keyword>
<keyword id="KW-1185">Reference proteome</keyword>
<accession>Q1ECV4</accession>
<sequence length="771" mass="88876">MHQHIQVPPLEGKSRINYVNLPLINGDKLRTAKTLVDKAIKEKKVFSVQGPYPVIRAGLRARGWVERRLPRPSFSQPRRHDHETETTDEGDSSDEDDLGEEVERDDEAEDLYDLMSRLVRHETPYFYWTTRRDSVDCRSLRKEQMTNHYAKAGSFTTKVGLCMHLRNLQWFDAADPDTFFPRCYRLGAQDEKHAFIDDFRRTACTSLLLYVLEKYEGDSEGEKMGEVHNAKSHGLRKTRKQHSSQRIETSVIDSALHVCQEYLNSLEHCDIDNNLETNSTISEQQWKVFLQNYYLVVHEGINIEGCEYYLERCKCMLEQMRQVCPQMENDGICNIWIIKPGAKSRGRGIMCMNKLDDMLGLVDGDHCIMKDSKWVVQKYIERPLLVHDTKFDVRQWFLVTDWNPLTVWFYRECYLRFSTQPYSTHTLDSSVHLCNNSIQKHYQPSPDRSPSLPAECMWSCSQFRSWLAASGRAALWKAVVVPGMQKAVIQTLLTAQDSVEPRKASFELYGADFMLGRDLRPWLLEINASPTMAPSTGVTARLCPAVQEDTLRVVLDRRSERNTDTGGFQLIYKQAAVDVPQYVGVNLLIEGTSIRRPRAPVHKSLIQSHPEPLSKSTNHKSSLLSSPCTSGKENQSEEVKRACPNLPNRKITMDQSLIFHPKRKRPHRLVLPSTCCVLPNPTELHHPQRLSHTQPQSDRPHTHRTRSNLPTLYRPTPSVEVINIRPRQALTSSHYIHKIHTVNLSYPVLRMQQNHRRSKNTFAEREGPKSS</sequence>
<reference key="1">
    <citation type="submission" date="2006-06" db="EMBL/GenBank/DDBJ databases">
        <authorList>
            <consortium name="NIH - Zebrafish Gene Collection (ZGC) project"/>
        </authorList>
    </citation>
    <scope>NUCLEOTIDE SEQUENCE [LARGE SCALE MRNA]</scope>
</reference>
<reference key="2">
    <citation type="journal article" date="2009" name="Dev. Cell">
        <title>TTLL3 Is a tubulin glycine ligase that regulates the assembly of cilia.</title>
        <authorList>
            <person name="Wloga D."/>
            <person name="Webster D.M."/>
            <person name="Rogowski K."/>
            <person name="Bre M.-H."/>
            <person name="Levilliers N."/>
            <person name="Jerka-Dziadosz M."/>
            <person name="Janke C."/>
            <person name="Dougan S.T."/>
            <person name="Gaertig J."/>
        </authorList>
    </citation>
    <scope>DISRUPTION PHENOTYPE</scope>
</reference>
<protein>
    <recommendedName>
        <fullName evidence="1">Tubulin monoglycylase TTLL3</fullName>
        <ecNumber evidence="1">6.3.2.-</ecNumber>
    </recommendedName>
    <alternativeName>
        <fullName>Tubulin--tyrosine ligase-like protein 3</fullName>
    </alternativeName>
</protein>
<gene>
    <name type="primary">ttll3</name>
    <name type="ORF">zgc:136840</name>
</gene>
<proteinExistence type="evidence at transcript level"/>
<dbReference type="EC" id="6.3.2.-" evidence="1"/>
<dbReference type="EMBL" id="BC117656">
    <property type="protein sequence ID" value="AAI17657.1"/>
    <property type="molecule type" value="mRNA"/>
</dbReference>
<dbReference type="RefSeq" id="NP_001038770.1">
    <property type="nucleotide sequence ID" value="NM_001045305.1"/>
</dbReference>
<dbReference type="SMR" id="Q1ECV4"/>
<dbReference type="FunCoup" id="Q1ECV4">
    <property type="interactions" value="591"/>
</dbReference>
<dbReference type="STRING" id="7955.ENSDARP00000094767"/>
<dbReference type="PaxDb" id="7955-ENSDARP00000105880"/>
<dbReference type="GeneID" id="724000"/>
<dbReference type="KEGG" id="dre:724000"/>
<dbReference type="AGR" id="ZFIN:ZDB-GENE-060616-182"/>
<dbReference type="CTD" id="26140"/>
<dbReference type="ZFIN" id="ZDB-GENE-060616-182">
    <property type="gene designation" value="ttll3"/>
</dbReference>
<dbReference type="eggNOG" id="KOG2157">
    <property type="taxonomic scope" value="Eukaryota"/>
</dbReference>
<dbReference type="InParanoid" id="Q1ECV4"/>
<dbReference type="OrthoDB" id="202825at2759"/>
<dbReference type="PhylomeDB" id="Q1ECV4"/>
<dbReference type="PRO" id="PR:Q1ECV4"/>
<dbReference type="Proteomes" id="UP000000437">
    <property type="component" value="Chromosome 6"/>
</dbReference>
<dbReference type="GO" id="GO:0005930">
    <property type="term" value="C:axoneme"/>
    <property type="evidence" value="ECO:0000250"/>
    <property type="project" value="UniProtKB"/>
</dbReference>
<dbReference type="GO" id="GO:0005929">
    <property type="term" value="C:cilium"/>
    <property type="evidence" value="ECO:0000314"/>
    <property type="project" value="ZFIN"/>
</dbReference>
<dbReference type="GO" id="GO:0005874">
    <property type="term" value="C:microtubule"/>
    <property type="evidence" value="ECO:0007669"/>
    <property type="project" value="UniProtKB-KW"/>
</dbReference>
<dbReference type="GO" id="GO:0015630">
    <property type="term" value="C:microtubule cytoskeleton"/>
    <property type="evidence" value="ECO:0000250"/>
    <property type="project" value="UniProtKB"/>
</dbReference>
<dbReference type="GO" id="GO:0036126">
    <property type="term" value="C:sperm flagellum"/>
    <property type="evidence" value="ECO:0000318"/>
    <property type="project" value="GO_Central"/>
</dbReference>
<dbReference type="GO" id="GO:0005524">
    <property type="term" value="F:ATP binding"/>
    <property type="evidence" value="ECO:0007669"/>
    <property type="project" value="UniProtKB-KW"/>
</dbReference>
<dbReference type="GO" id="GO:0046872">
    <property type="term" value="F:metal ion binding"/>
    <property type="evidence" value="ECO:0007669"/>
    <property type="project" value="UniProtKB-KW"/>
</dbReference>
<dbReference type="GO" id="GO:0070735">
    <property type="term" value="F:protein-glycine ligase activity"/>
    <property type="evidence" value="ECO:0000315"/>
    <property type="project" value="UniProtKB"/>
</dbReference>
<dbReference type="GO" id="GO:0070736">
    <property type="term" value="F:protein-glycine ligase activity, initiating"/>
    <property type="evidence" value="ECO:0000250"/>
    <property type="project" value="UniProtKB"/>
</dbReference>
<dbReference type="GO" id="GO:0070738">
    <property type="term" value="F:tubulin-glycine ligase activity"/>
    <property type="evidence" value="ECO:0000315"/>
    <property type="project" value="ZFIN"/>
</dbReference>
<dbReference type="GO" id="GO:0035082">
    <property type="term" value="P:axoneme assembly"/>
    <property type="evidence" value="ECO:0000315"/>
    <property type="project" value="UniProtKB"/>
</dbReference>
<dbReference type="GO" id="GO:0060271">
    <property type="term" value="P:cilium assembly"/>
    <property type="evidence" value="ECO:0000315"/>
    <property type="project" value="UniProtKB"/>
</dbReference>
<dbReference type="GO" id="GO:0003341">
    <property type="term" value="P:cilium movement"/>
    <property type="evidence" value="ECO:0000316"/>
    <property type="project" value="ZFIN"/>
</dbReference>
<dbReference type="GO" id="GO:0030317">
    <property type="term" value="P:flagellated sperm motility"/>
    <property type="evidence" value="ECO:0000318"/>
    <property type="project" value="GO_Central"/>
</dbReference>
<dbReference type="GO" id="GO:0018094">
    <property type="term" value="P:protein polyglycylation"/>
    <property type="evidence" value="ECO:0000315"/>
    <property type="project" value="UniProtKB"/>
</dbReference>
<dbReference type="GO" id="GO:0007283">
    <property type="term" value="P:spermatogenesis"/>
    <property type="evidence" value="ECO:0000318"/>
    <property type="project" value="GO_Central"/>
</dbReference>
<dbReference type="FunFam" id="3.30.470.20:FF:000032">
    <property type="entry name" value="tubulin monoglycylase TTLL3 isoform X2"/>
    <property type="match status" value="1"/>
</dbReference>
<dbReference type="Gene3D" id="3.30.470.20">
    <property type="entry name" value="ATP-grasp fold, B domain"/>
    <property type="match status" value="1"/>
</dbReference>
<dbReference type="InterPro" id="IPR004344">
    <property type="entry name" value="TTL/TTLL_fam"/>
</dbReference>
<dbReference type="InterPro" id="IPR051437">
    <property type="entry name" value="TTLL_monoglycylase"/>
</dbReference>
<dbReference type="PANTHER" id="PTHR45870">
    <property type="entry name" value="TUBULIN MONOGLYCYLASE TTLL3"/>
    <property type="match status" value="1"/>
</dbReference>
<dbReference type="PANTHER" id="PTHR45870:SF2">
    <property type="entry name" value="TUBULIN MONOGLYCYLASE TTLL3"/>
    <property type="match status" value="1"/>
</dbReference>
<dbReference type="Pfam" id="PF03133">
    <property type="entry name" value="TTL"/>
    <property type="match status" value="1"/>
</dbReference>
<dbReference type="SUPFAM" id="SSF56059">
    <property type="entry name" value="Glutathione synthetase ATP-binding domain-like"/>
    <property type="match status" value="1"/>
</dbReference>
<dbReference type="PROSITE" id="PS51221">
    <property type="entry name" value="TTL"/>
    <property type="match status" value="1"/>
</dbReference>
<comment type="function">
    <text evidence="1 3">Monoglycylase which modifies alpha- and beta-tubulin, adding a single glycine on the gamma-carboxyl groups of specific glutamate residues to generate monoglycine side chains within the C-terminal tail of tubulin. Not involved in elongation step of the polyglycylation reaction (By similarity). Preferentially glycylates a beta-tail peptide over the alpha-tail, although shifts its preference toward alpha-tail as beta-tail glutamylation increases (By similarity). Competes with polyglutamylases for modification site on beta-tubulin substrate, thereby creating an anticorrelation between glycylation and glutamylation reactions (By similarity). Not involved in elongation step of the polyglycylation reaction (By similarity).</text>
</comment>
<comment type="catalytic activity">
    <reaction evidence="1">
        <text>L-glutamyl-[protein] + glycine + ATP = glycyl-L-glutamyl-[protein] + ADP + phosphate + H(+)</text>
        <dbReference type="Rhea" id="RHEA:67180"/>
        <dbReference type="Rhea" id="RHEA-COMP:10208"/>
        <dbReference type="Rhea" id="RHEA-COMP:17207"/>
        <dbReference type="ChEBI" id="CHEBI:15378"/>
        <dbReference type="ChEBI" id="CHEBI:29973"/>
        <dbReference type="ChEBI" id="CHEBI:30616"/>
        <dbReference type="ChEBI" id="CHEBI:43474"/>
        <dbReference type="ChEBI" id="CHEBI:57305"/>
        <dbReference type="ChEBI" id="CHEBI:167890"/>
        <dbReference type="ChEBI" id="CHEBI:456216"/>
    </reaction>
    <physiologicalReaction direction="left-to-right" evidence="1">
        <dbReference type="Rhea" id="RHEA:67181"/>
    </physiologicalReaction>
</comment>
<comment type="cofactor">
    <cofactor evidence="2">
        <name>Mg(2+)</name>
        <dbReference type="ChEBI" id="CHEBI:18420"/>
    </cofactor>
</comment>
<comment type="subcellular location">
    <subcellularLocation>
        <location evidence="1">Cytoplasm</location>
        <location evidence="1">Cytoskeleton</location>
    </subcellularLocation>
    <subcellularLocation>
        <location evidence="1">Cell projection</location>
        <location evidence="1">Cilium</location>
    </subcellularLocation>
    <subcellularLocation>
        <location evidence="1">Cytoplasm</location>
        <location evidence="1">Cytoskeleton</location>
        <location evidence="1">Cilium axoneme</location>
    </subcellularLocation>
    <subcellularLocation>
        <location evidence="1">Cytoplasm</location>
        <location evidence="1">Cytoskeleton</location>
        <location evidence="1">Flagellum axoneme</location>
    </subcellularLocation>
</comment>
<comment type="domain">
    <text evidence="3">Two conserved structural elements specific among monoglycylases, IS1 and IS2, are involved in glycyl chains initiation. Two conserved structural interfaces likely constitute the binding platforms for tubulin tail and microtubule.</text>
</comment>
<comment type="domain">
    <text evidence="2">Arg-345 is the main determinant for regioselectivity, which segregates between initiases and elongases in all tubulin--tyrosine ligase family. A glutamine residue at this position is found in elongases TTLL6, TTLL9, TTLL11, TTLL13, TTLL10 and favors glutamate-chain elongation, whereas an arginine residue is found in initiases TTLL2, TTLL4, TTLL5, TTLL3, TTLL8 and favors initiation.</text>
</comment>
<comment type="disruption phenotype">
    <text evidence="6">Shortening and loss of cilia in several organs, including the Kupffer's vesicle and olfactory placode.</text>
</comment>
<comment type="caution">
    <text evidence="1">TTLL3 and TTLL8 monoglycylase-mediated glycylation of tubulin was initially reported to play a role in ependymal motile ciliary maintenance (By similarity). However, contradictory results were later observed (By similarity).</text>
</comment>
<name>TTLL3_DANRE</name>
<organism>
    <name type="scientific">Danio rerio</name>
    <name type="common">Zebrafish</name>
    <name type="synonym">Brachydanio rerio</name>
    <dbReference type="NCBI Taxonomy" id="7955"/>
    <lineage>
        <taxon>Eukaryota</taxon>
        <taxon>Metazoa</taxon>
        <taxon>Chordata</taxon>
        <taxon>Craniata</taxon>
        <taxon>Vertebrata</taxon>
        <taxon>Euteleostomi</taxon>
        <taxon>Actinopterygii</taxon>
        <taxon>Neopterygii</taxon>
        <taxon>Teleostei</taxon>
        <taxon>Ostariophysi</taxon>
        <taxon>Cypriniformes</taxon>
        <taxon>Danionidae</taxon>
        <taxon>Danioninae</taxon>
        <taxon>Danio</taxon>
    </lineage>
</organism>